<keyword id="KW-0067">ATP-binding</keyword>
<keyword id="KW-0131">Cell cycle</keyword>
<keyword id="KW-0132">Cell division</keyword>
<keyword id="KW-0133">Cell shape</keyword>
<keyword id="KW-0961">Cell wall biogenesis/degradation</keyword>
<keyword id="KW-0963">Cytoplasm</keyword>
<keyword id="KW-0436">Ligase</keyword>
<keyword id="KW-0547">Nucleotide-binding</keyword>
<keyword id="KW-0573">Peptidoglycan synthesis</keyword>
<comment type="function">
    <text evidence="1">Cell wall formation.</text>
</comment>
<comment type="catalytic activity">
    <reaction evidence="1">
        <text>UDP-N-acetyl-alpha-D-muramate + L-alanine + ATP = UDP-N-acetyl-alpha-D-muramoyl-L-alanine + ADP + phosphate + H(+)</text>
        <dbReference type="Rhea" id="RHEA:23372"/>
        <dbReference type="ChEBI" id="CHEBI:15378"/>
        <dbReference type="ChEBI" id="CHEBI:30616"/>
        <dbReference type="ChEBI" id="CHEBI:43474"/>
        <dbReference type="ChEBI" id="CHEBI:57972"/>
        <dbReference type="ChEBI" id="CHEBI:70757"/>
        <dbReference type="ChEBI" id="CHEBI:83898"/>
        <dbReference type="ChEBI" id="CHEBI:456216"/>
        <dbReference type="EC" id="6.3.2.8"/>
    </reaction>
</comment>
<comment type="pathway">
    <text evidence="1">Cell wall biogenesis; peptidoglycan biosynthesis.</text>
</comment>
<comment type="subcellular location">
    <subcellularLocation>
        <location evidence="1">Cytoplasm</location>
    </subcellularLocation>
</comment>
<comment type="similarity">
    <text evidence="1">Belongs to the MurCDEF family.</text>
</comment>
<gene>
    <name evidence="1" type="primary">murC</name>
    <name type="ordered locus">CMS1374</name>
</gene>
<protein>
    <recommendedName>
        <fullName evidence="1">UDP-N-acetylmuramate--L-alanine ligase</fullName>
        <ecNumber evidence="1">6.3.2.8</ecNumber>
    </recommendedName>
    <alternativeName>
        <fullName evidence="1">UDP-N-acetylmuramoyl-L-alanine synthetase</fullName>
    </alternativeName>
</protein>
<evidence type="ECO:0000255" key="1">
    <source>
        <dbReference type="HAMAP-Rule" id="MF_00046"/>
    </source>
</evidence>
<proteinExistence type="inferred from homology"/>
<reference key="1">
    <citation type="journal article" date="2008" name="J. Bacteriol.">
        <title>Genome of the actinomycete plant pathogen Clavibacter michiganensis subsp. sepedonicus suggests recent niche adaptation.</title>
        <authorList>
            <person name="Bentley S.D."/>
            <person name="Corton C."/>
            <person name="Brown S.E."/>
            <person name="Barron A."/>
            <person name="Clark L."/>
            <person name="Doggett J."/>
            <person name="Harris B."/>
            <person name="Ormond D."/>
            <person name="Quail M.A."/>
            <person name="May G."/>
            <person name="Francis D."/>
            <person name="Knudson D."/>
            <person name="Parkhill J."/>
            <person name="Ishimaru C.A."/>
        </authorList>
    </citation>
    <scope>NUCLEOTIDE SEQUENCE [LARGE SCALE GENOMIC DNA]</scope>
    <source>
        <strain>ATCC 33113 / DSM 20744 / JCM 9667 / LMG 2889 / ICMP 2535 / C-1</strain>
    </source>
</reference>
<accession>B0RIJ4</accession>
<feature type="chain" id="PRO_0000336823" description="UDP-N-acetylmuramate--L-alanine ligase">
    <location>
        <begin position="1"/>
        <end position="476"/>
    </location>
</feature>
<feature type="binding site" evidence="1">
    <location>
        <begin position="121"/>
        <end position="127"/>
    </location>
    <ligand>
        <name>ATP</name>
        <dbReference type="ChEBI" id="CHEBI:30616"/>
    </ligand>
</feature>
<dbReference type="EC" id="6.3.2.8" evidence="1"/>
<dbReference type="EMBL" id="AM849034">
    <property type="protein sequence ID" value="CAQ01485.1"/>
    <property type="molecule type" value="Genomic_DNA"/>
</dbReference>
<dbReference type="RefSeq" id="WP_012298752.1">
    <property type="nucleotide sequence ID" value="NZ_MZMN01000003.1"/>
</dbReference>
<dbReference type="SMR" id="B0RIJ4"/>
<dbReference type="STRING" id="31964.CMS1374"/>
<dbReference type="KEGG" id="cms:CMS1374"/>
<dbReference type="eggNOG" id="COG0773">
    <property type="taxonomic scope" value="Bacteria"/>
</dbReference>
<dbReference type="HOGENOM" id="CLU_028104_2_2_11"/>
<dbReference type="OrthoDB" id="9804126at2"/>
<dbReference type="UniPathway" id="UPA00219"/>
<dbReference type="Proteomes" id="UP000001318">
    <property type="component" value="Chromosome"/>
</dbReference>
<dbReference type="GO" id="GO:0005737">
    <property type="term" value="C:cytoplasm"/>
    <property type="evidence" value="ECO:0007669"/>
    <property type="project" value="UniProtKB-SubCell"/>
</dbReference>
<dbReference type="GO" id="GO:0005524">
    <property type="term" value="F:ATP binding"/>
    <property type="evidence" value="ECO:0007669"/>
    <property type="project" value="UniProtKB-UniRule"/>
</dbReference>
<dbReference type="GO" id="GO:0008763">
    <property type="term" value="F:UDP-N-acetylmuramate-L-alanine ligase activity"/>
    <property type="evidence" value="ECO:0007669"/>
    <property type="project" value="UniProtKB-UniRule"/>
</dbReference>
<dbReference type="GO" id="GO:0051301">
    <property type="term" value="P:cell division"/>
    <property type="evidence" value="ECO:0007669"/>
    <property type="project" value="UniProtKB-KW"/>
</dbReference>
<dbReference type="GO" id="GO:0071555">
    <property type="term" value="P:cell wall organization"/>
    <property type="evidence" value="ECO:0007669"/>
    <property type="project" value="UniProtKB-KW"/>
</dbReference>
<dbReference type="GO" id="GO:0009252">
    <property type="term" value="P:peptidoglycan biosynthetic process"/>
    <property type="evidence" value="ECO:0007669"/>
    <property type="project" value="UniProtKB-UniRule"/>
</dbReference>
<dbReference type="GO" id="GO:0008360">
    <property type="term" value="P:regulation of cell shape"/>
    <property type="evidence" value="ECO:0007669"/>
    <property type="project" value="UniProtKB-KW"/>
</dbReference>
<dbReference type="Gene3D" id="3.90.190.20">
    <property type="entry name" value="Mur ligase, C-terminal domain"/>
    <property type="match status" value="1"/>
</dbReference>
<dbReference type="Gene3D" id="3.40.1190.10">
    <property type="entry name" value="Mur-like, catalytic domain"/>
    <property type="match status" value="1"/>
</dbReference>
<dbReference type="Gene3D" id="3.40.50.720">
    <property type="entry name" value="NAD(P)-binding Rossmann-like Domain"/>
    <property type="match status" value="1"/>
</dbReference>
<dbReference type="HAMAP" id="MF_00046">
    <property type="entry name" value="MurC"/>
    <property type="match status" value="1"/>
</dbReference>
<dbReference type="InterPro" id="IPR036565">
    <property type="entry name" value="Mur-like_cat_sf"/>
</dbReference>
<dbReference type="InterPro" id="IPR004101">
    <property type="entry name" value="Mur_ligase_C"/>
</dbReference>
<dbReference type="InterPro" id="IPR036615">
    <property type="entry name" value="Mur_ligase_C_dom_sf"/>
</dbReference>
<dbReference type="InterPro" id="IPR013221">
    <property type="entry name" value="Mur_ligase_cen"/>
</dbReference>
<dbReference type="InterPro" id="IPR000713">
    <property type="entry name" value="Mur_ligase_N"/>
</dbReference>
<dbReference type="InterPro" id="IPR050061">
    <property type="entry name" value="MurCDEF_pg_biosynth"/>
</dbReference>
<dbReference type="InterPro" id="IPR005758">
    <property type="entry name" value="UDP-N-AcMur_Ala_ligase_MurC"/>
</dbReference>
<dbReference type="NCBIfam" id="TIGR01082">
    <property type="entry name" value="murC"/>
    <property type="match status" value="1"/>
</dbReference>
<dbReference type="PANTHER" id="PTHR43445:SF3">
    <property type="entry name" value="UDP-N-ACETYLMURAMATE--L-ALANINE LIGASE"/>
    <property type="match status" value="1"/>
</dbReference>
<dbReference type="PANTHER" id="PTHR43445">
    <property type="entry name" value="UDP-N-ACETYLMURAMATE--L-ALANINE LIGASE-RELATED"/>
    <property type="match status" value="1"/>
</dbReference>
<dbReference type="Pfam" id="PF01225">
    <property type="entry name" value="Mur_ligase"/>
    <property type="match status" value="1"/>
</dbReference>
<dbReference type="Pfam" id="PF02875">
    <property type="entry name" value="Mur_ligase_C"/>
    <property type="match status" value="1"/>
</dbReference>
<dbReference type="Pfam" id="PF08245">
    <property type="entry name" value="Mur_ligase_M"/>
    <property type="match status" value="1"/>
</dbReference>
<dbReference type="SUPFAM" id="SSF51984">
    <property type="entry name" value="MurCD N-terminal domain"/>
    <property type="match status" value="1"/>
</dbReference>
<dbReference type="SUPFAM" id="SSF53623">
    <property type="entry name" value="MurD-like peptide ligases, catalytic domain"/>
    <property type="match status" value="1"/>
</dbReference>
<dbReference type="SUPFAM" id="SSF53244">
    <property type="entry name" value="MurD-like peptide ligases, peptide-binding domain"/>
    <property type="match status" value="1"/>
</dbReference>
<name>MURC_CLASE</name>
<sequence>MIAPDLTMDIPTELGRVHFVGIGGSGMSGIARLFLAAGHRVTGSDSRDSDAVQALRELGAEIHVGHDAAHVGDADALVVTGALWQDNPEYVLAKERGLPILHRSQALAWLISGQRLVAVAGAHGKTTSTGMIVTALLEAGRDPSFVNGGVIGGIGVSSAPGSEELFVVEADESDGSFLLYDTAVALITNVDADHLDHYGSHEAFDDAFVRFASAASELVVISSDDPGARRVTARIEGRVVTFGEDPAADIRITDIVTDGPVAFTLTHDGVSRRAALRVPGRHNAINAAGAYAVLVGLGVDPDDAIAGLAGFSGTSRRFELHAEVRGVSVYDDYAHHPTEVRAALEAARTVVGEGRIIAVHQPHLYSRTQMMAGDFARVYEELADHTIVLDVFGAREDPIPGVTGALVSERFADASHVDYLPDWQQAADRAAEIARDGDFIVTLSCGDVYRIIPQVIGALERPAGSAQPAASSRPRE</sequence>
<organism>
    <name type="scientific">Clavibacter sepedonicus</name>
    <name type="common">Clavibacter michiganensis subsp. sepedonicus</name>
    <dbReference type="NCBI Taxonomy" id="31964"/>
    <lineage>
        <taxon>Bacteria</taxon>
        <taxon>Bacillati</taxon>
        <taxon>Actinomycetota</taxon>
        <taxon>Actinomycetes</taxon>
        <taxon>Micrococcales</taxon>
        <taxon>Microbacteriaceae</taxon>
        <taxon>Clavibacter</taxon>
    </lineage>
</organism>